<name>VPS2A_ARATH</name>
<evidence type="ECO:0000250" key="1"/>
<evidence type="ECO:0000250" key="2">
    <source>
        <dbReference type="UniProtKB" id="O43633"/>
    </source>
</evidence>
<evidence type="ECO:0000255" key="3"/>
<evidence type="ECO:0000269" key="4">
    <source>
    </source>
</evidence>
<evidence type="ECO:0000269" key="5">
    <source>
    </source>
</evidence>
<evidence type="ECO:0000305" key="6"/>
<reference key="1">
    <citation type="journal article" date="1999" name="Nature">
        <title>Sequence and analysis of chromosome 2 of the plant Arabidopsis thaliana.</title>
        <authorList>
            <person name="Lin X."/>
            <person name="Kaul S."/>
            <person name="Rounsley S.D."/>
            <person name="Shea T.P."/>
            <person name="Benito M.-I."/>
            <person name="Town C.D."/>
            <person name="Fujii C.Y."/>
            <person name="Mason T.M."/>
            <person name="Bowman C.L."/>
            <person name="Barnstead M.E."/>
            <person name="Feldblyum T.V."/>
            <person name="Buell C.R."/>
            <person name="Ketchum K.A."/>
            <person name="Lee J.J."/>
            <person name="Ronning C.M."/>
            <person name="Koo H.L."/>
            <person name="Moffat K.S."/>
            <person name="Cronin L.A."/>
            <person name="Shen M."/>
            <person name="Pai G."/>
            <person name="Van Aken S."/>
            <person name="Umayam L."/>
            <person name="Tallon L.J."/>
            <person name="Gill J.E."/>
            <person name="Adams M.D."/>
            <person name="Carrera A.J."/>
            <person name="Creasy T.H."/>
            <person name="Goodman H.M."/>
            <person name="Somerville C.R."/>
            <person name="Copenhaver G.P."/>
            <person name="Preuss D."/>
            <person name="Nierman W.C."/>
            <person name="White O."/>
            <person name="Eisen J.A."/>
            <person name="Salzberg S.L."/>
            <person name="Fraser C.M."/>
            <person name="Venter J.C."/>
        </authorList>
    </citation>
    <scope>NUCLEOTIDE SEQUENCE [LARGE SCALE GENOMIC DNA]</scope>
    <source>
        <strain>cv. Columbia</strain>
    </source>
</reference>
<reference key="2">
    <citation type="journal article" date="2017" name="Plant J.">
        <title>Araport11: a complete reannotation of the Arabidopsis thaliana reference genome.</title>
        <authorList>
            <person name="Cheng C.Y."/>
            <person name="Krishnakumar V."/>
            <person name="Chan A.P."/>
            <person name="Thibaud-Nissen F."/>
            <person name="Schobel S."/>
            <person name="Town C.D."/>
        </authorList>
    </citation>
    <scope>GENOME REANNOTATION</scope>
    <source>
        <strain>cv. Columbia</strain>
    </source>
</reference>
<reference key="3">
    <citation type="journal article" date="2003" name="Science">
        <title>Empirical analysis of transcriptional activity in the Arabidopsis genome.</title>
        <authorList>
            <person name="Yamada K."/>
            <person name="Lim J."/>
            <person name="Dale J.M."/>
            <person name="Chen H."/>
            <person name="Shinn P."/>
            <person name="Palm C.J."/>
            <person name="Southwick A.M."/>
            <person name="Wu H.C."/>
            <person name="Kim C.J."/>
            <person name="Nguyen M."/>
            <person name="Pham P.K."/>
            <person name="Cheuk R.F."/>
            <person name="Karlin-Newmann G."/>
            <person name="Liu S.X."/>
            <person name="Lam B."/>
            <person name="Sakano H."/>
            <person name="Wu T."/>
            <person name="Yu G."/>
            <person name="Miranda M."/>
            <person name="Quach H.L."/>
            <person name="Tripp M."/>
            <person name="Chang C.H."/>
            <person name="Lee J.M."/>
            <person name="Toriumi M.J."/>
            <person name="Chan M.M."/>
            <person name="Tang C.C."/>
            <person name="Onodera C.S."/>
            <person name="Deng J.M."/>
            <person name="Akiyama K."/>
            <person name="Ansari Y."/>
            <person name="Arakawa T."/>
            <person name="Banh J."/>
            <person name="Banno F."/>
            <person name="Bowser L."/>
            <person name="Brooks S.Y."/>
            <person name="Carninci P."/>
            <person name="Chao Q."/>
            <person name="Choy N."/>
            <person name="Enju A."/>
            <person name="Goldsmith A.D."/>
            <person name="Gurjal M."/>
            <person name="Hansen N.F."/>
            <person name="Hayashizaki Y."/>
            <person name="Johnson-Hopson C."/>
            <person name="Hsuan V.W."/>
            <person name="Iida K."/>
            <person name="Karnes M."/>
            <person name="Khan S."/>
            <person name="Koesema E."/>
            <person name="Ishida J."/>
            <person name="Jiang P.X."/>
            <person name="Jones T."/>
            <person name="Kawai J."/>
            <person name="Kamiya A."/>
            <person name="Meyers C."/>
            <person name="Nakajima M."/>
            <person name="Narusaka M."/>
            <person name="Seki M."/>
            <person name="Sakurai T."/>
            <person name="Satou M."/>
            <person name="Tamse R."/>
            <person name="Vaysberg M."/>
            <person name="Wallender E.K."/>
            <person name="Wong C."/>
            <person name="Yamamura Y."/>
            <person name="Yuan S."/>
            <person name="Shinozaki K."/>
            <person name="Davis R.W."/>
            <person name="Theologis A."/>
            <person name="Ecker J.R."/>
        </authorList>
    </citation>
    <scope>NUCLEOTIDE SEQUENCE [LARGE SCALE MRNA]</scope>
    <source>
        <strain>cv. Columbia</strain>
    </source>
</reference>
<reference key="4">
    <citation type="submission" date="2002-03" db="EMBL/GenBank/DDBJ databases">
        <title>Full-length cDNA from Arabidopsis thaliana.</title>
        <authorList>
            <person name="Brover V.V."/>
            <person name="Troukhan M.E."/>
            <person name="Alexandrov N.A."/>
            <person name="Lu Y.-P."/>
            <person name="Flavell R.B."/>
            <person name="Feldmann K.A."/>
        </authorList>
    </citation>
    <scope>NUCLEOTIDE SEQUENCE [LARGE SCALE MRNA]</scope>
</reference>
<reference key="5">
    <citation type="journal article" date="2004" name="Plant Biol.">
        <title>Geographic distribution and recombination of genomic fragments on the short arm of chromosome 2 of Arabidopsis thaliana.</title>
        <authorList>
            <person name="Schmuths H."/>
            <person name="Hoffmann M.H."/>
            <person name="Bachmann K."/>
        </authorList>
    </citation>
    <scope>NUCLEOTIDE SEQUENCE [GENOMIC DNA] OF 15-225</scope>
    <source>
        <strain>cv. Ag-0</strain>
        <strain>cv. Alc-0</strain>
        <strain>cv. Bad</strain>
        <strain>cv. Bas-1</strain>
        <strain>cv. Bas-2</strain>
        <strain>cv. Bas-3</strain>
        <strain>cv. Bij</strain>
        <strain>cv. Bla-1</strain>
        <strain>cv. Blh-1</strain>
        <strain>cv. Br-0</strain>
        <strain>cv. Bs-2</strain>
        <strain>cv. Bur-0</strain>
        <strain>cv. Can-0</strain>
        <strain>cv. Cha-1</strain>
        <strain>cv. Cha-2</strain>
        <strain>cv. Chi-0</strain>
        <strain>cv. Chi-1</strain>
        <strain>cv. Co</strain>
        <strain>cv. Columbia</strain>
        <strain>cv. Ct-1</strain>
        <strain>cv. Cvi-0</strain>
        <strain>cv. Dar</strain>
        <strain>cv. Di-1</strain>
        <strain>cv. Dul</strain>
        <strain>cv. Edi-0</strain>
        <strain>cv. Es-0</strain>
        <strain>cv. Est-0</strain>
        <strain>cv. Flo</strain>
        <strain>cv. Gat</strain>
        <strain>cv. Gie</strain>
        <strain>cv. Gre-0</strain>
        <strain>cv. Han</strain>
        <strain>cv. HOG</strain>
        <strain>cv. In-0</strain>
        <strain>cv. Ita</strain>
        <strain>cv. K-oz-1</strain>
        <strain>cv. K-oz-2</strain>
        <strain>cv. K-oz-3</strain>
        <strain>cv. Kaz-1</strain>
        <strain>cv. Kaz-2</strain>
        <strain>cv. Kaz-3</strain>
        <strain>cv. KEN</strain>
        <strain>cv. Kent</strain>
        <strain>cv. Kga</strain>
        <strain>cv. Kly-1</strain>
        <strain>cv. Kly-2</strain>
        <strain>cv. Kly-3</strain>
        <strain>cv. Kly-4</strain>
        <strain>cv. Kly-6</strain>
        <strain>cv. Kn-0</strain>
        <strain>cv. Ko-2</strain>
        <strain>cv. Kol</strain>
        <strain>cv. Kon</strain>
        <strain>cv. La-0</strain>
        <strain>cv. Leb-1</strain>
        <strain>cv. Leb-2</strain>
        <strain>cv. Leb-3</strain>
        <strain>cv. Leb-4</strain>
        <strain>cv. Lim</strain>
        <strain>cv. Lip-0</strain>
        <strain>cv. Lis</strain>
        <strain>cv. Ll-2</strain>
        <strain>cv. Mal</strain>
        <strain>cv. Mas</strain>
        <strain>cv. Mt-0</strain>
        <strain>cv. Nos-1</strain>
        <strain>cv. Nov-1</strain>
        <strain>cv. Nov-2</strain>
        <strain>cv. Nov-3</strain>
        <strain>cv. Oph</strain>
        <strain>cv. Oy-0</strain>
        <strain>cv. Pan-1</strain>
        <strain>cv. Par</strain>
        <strain>cv. Per-1</strain>
        <strain>cv. Pog-0</strain>
        <strain>cv. Rak-1</strain>
        <strain>cv. Rak-2</strain>
        <strain>cv. Rak-3</strain>
        <strain>cv. Rsch-0</strain>
        <strain>cv. Rub</strain>
        <strain>cv. Ryb-0</strain>
        <strain>cv. Sah-0</strain>
        <strain>cv. Sea-0</strain>
        <strain>cv. Sed</strain>
        <strain>cv. Sev-1</strain>
        <strain>cv. Sha</strain>
        <strain>cv. Sie</strain>
        <strain>cv. Sij-1</strain>
        <strain>cv. Sij-2</strain>
        <strain>cv. Sij-4</strain>
        <strain>cv. St-0</strain>
        <strain>cv. Stw-0</strain>
        <strain>cv. Tsar</strain>
        <strain>cv. Tsu-0</strain>
        <strain>cv. Wa-1</strain>
        <strain>cv. Wassilewskija-1</strain>
        <strain>cv. Wil-1</strain>
        <strain>cv. Wt</strain>
        <tissue>Leaf</tissue>
    </source>
</reference>
<reference key="6">
    <citation type="journal article" date="2006" name="Development">
        <title>The Arabidopsis elch mutant reveals functions of an ESCRT component in cytokinesis.</title>
        <authorList>
            <person name="Spitzer C."/>
            <person name="Schellmann S."/>
            <person name="Sabovljevic A."/>
            <person name="Shahriari M."/>
            <person name="Keshavaiah C."/>
            <person name="Bechtold N."/>
            <person name="Herzog M."/>
            <person name="Mueller S."/>
            <person name="Hanisch F.-G."/>
            <person name="Huelskamp M."/>
        </authorList>
    </citation>
    <scope>IDENTIFICATION</scope>
    <scope>NOMENCLATURE</scope>
</reference>
<reference key="7">
    <citation type="journal article" date="2006" name="Trends Plant Sci.">
        <title>Exploring the ESCRTing machinery in eukaryotes.</title>
        <authorList>
            <person name="Winter V."/>
            <person name="Hauser M.-T."/>
        </authorList>
    </citation>
    <scope>IDENTIFICATION</scope>
</reference>
<reference key="8">
    <citation type="journal article" date="2011" name="Plant Cell">
        <title>The Arabidopsis deubiquitinating enzyme AMSH3 interacts with ESCRT-III subunits and regulates their localization.</title>
        <authorList>
            <person name="Katsiarimpa A."/>
            <person name="Anzenberger F."/>
            <person name="Schlager N."/>
            <person name="Neubert S."/>
            <person name="Hauser M.T."/>
            <person name="Schwechheimer C."/>
            <person name="Isono E."/>
        </authorList>
    </citation>
    <scope>INTERACTION WITH SKD1</scope>
</reference>
<reference key="9">
    <citation type="journal article" date="2014" name="Plant Physiol.">
        <title>The Arabidopsis endosomal sorting complex required for transport III regulates internal vesicle formation of the prevacuolar compartment and is required for plant development.</title>
        <authorList>
            <person name="Cai Y."/>
            <person name="Zhuang X."/>
            <person name="Gao C."/>
            <person name="Wang X."/>
            <person name="Jiang L."/>
        </authorList>
    </citation>
    <scope>INTERACTION WITH SKD1</scope>
    <scope>REVIEW ON ESCRT-III</scope>
</reference>
<protein>
    <recommendedName>
        <fullName>Vacuolar protein sorting-associated protein 2 homolog 1</fullName>
        <shortName>AtVPS2-1</shortName>
    </recommendedName>
    <alternativeName>
        <fullName>Charged multivesicular body protein 2 homolog 1</fullName>
    </alternativeName>
    <alternativeName>
        <fullName>ESCRT-III complex subunit VPS2 homolog 1</fullName>
    </alternativeName>
    <alternativeName>
        <fullName>SNF7-like protein</fullName>
    </alternativeName>
</protein>
<keyword id="KW-0175">Coiled coil</keyword>
<keyword id="KW-0967">Endosome</keyword>
<keyword id="KW-0653">Protein transport</keyword>
<keyword id="KW-1185">Reference proteome</keyword>
<keyword id="KW-0813">Transport</keyword>
<organism>
    <name type="scientific">Arabidopsis thaliana</name>
    <name type="common">Mouse-ear cress</name>
    <dbReference type="NCBI Taxonomy" id="3702"/>
    <lineage>
        <taxon>Eukaryota</taxon>
        <taxon>Viridiplantae</taxon>
        <taxon>Streptophyta</taxon>
        <taxon>Embryophyta</taxon>
        <taxon>Tracheophyta</taxon>
        <taxon>Spermatophyta</taxon>
        <taxon>Magnoliopsida</taxon>
        <taxon>eudicotyledons</taxon>
        <taxon>Gunneridae</taxon>
        <taxon>Pentapetalae</taxon>
        <taxon>rosids</taxon>
        <taxon>malvids</taxon>
        <taxon>Brassicales</taxon>
        <taxon>Brassicaceae</taxon>
        <taxon>Camelineae</taxon>
        <taxon>Arabidopsis</taxon>
    </lineage>
</organism>
<sequence length="225" mass="25292">MMNSIFGKRKTPAELLRENKRMLDKSIREIERERQGLQTQEKKLINEIKKTAKQGQMGAVKVMAKDLIRTRHQIEKFYKLKSQLQGVSLRIQTLKSTQAMGEAMKGVTKAMGQMNRQMNLPSLQKIMQEFERQNEKMEMVSEVMGDAIDDALEGDEEEEETEDLVSQVLDEIGIDINQELVNAPSGAVAVPAAKNKVVQAEATGAEDSGGIDSDLQARLDNLRKM</sequence>
<proteinExistence type="evidence at protein level"/>
<accession>Q9SKI2</accession>
<accession>Q701A4</accession>
<accession>Q701B3</accession>
<accession>Q701B7</accession>
<accession>Q701C5</accession>
<accession>Q701E0</accession>
<accession>Q701E1</accession>
<accession>Q701E3</accession>
<accession>Q701F9</accession>
<accession>Q701G8</accession>
<accession>Q701J8</accession>
<accession>Q8L915</accession>
<feature type="chain" id="PRO_0000368195" description="Vacuolar protein sorting-associated protein 2 homolog 1">
    <location>
        <begin position="1"/>
        <end position="225"/>
    </location>
</feature>
<feature type="coiled-coil region" evidence="3">
    <location>
        <begin position="13"/>
        <end position="54"/>
    </location>
</feature>
<feature type="sequence variant" description="In strain: cv. Ag-0.">
    <original>E</original>
    <variation>Q</variation>
    <location>
        <position position="47"/>
    </location>
</feature>
<feature type="sequence variant" description="In strain: cv. Per-1.">
    <original>K</original>
    <variation>R</variation>
    <location>
        <position position="95"/>
    </location>
</feature>
<feature type="sequence variant" description="In strain: cv. Mal.">
    <original>V</original>
    <variation>F</variation>
    <location>
        <position position="143"/>
    </location>
</feature>
<feature type="sequence variant" description="In strain: cv. Bas-2.">
    <original>N</original>
    <variation>S</variation>
    <location>
        <position position="182"/>
    </location>
</feature>
<feature type="sequence variant" description="In strain: cv. Ct-1.">
    <original>G</original>
    <variation>S</variation>
    <location>
        <position position="186"/>
    </location>
</feature>
<feature type="sequence variant" description="In strain: cv. Tsar.">
    <original>A</original>
    <variation>T</variation>
    <location>
        <position position="192"/>
    </location>
</feature>
<feature type="sequence variant" description="In strain: cv. Edi-0, cv. Lip-0, cv. Sie and cv. Bur-0.">
    <original>A</original>
    <variation>T</variation>
    <location>
        <position position="193"/>
    </location>
</feature>
<feature type="sequence variant" description="In strain: cv. Mas.">
    <original>V</original>
    <variation>G</variation>
    <location>
        <position position="198"/>
    </location>
</feature>
<feature type="sequence variant" description="In strain: cv. Dul.">
    <original>V</original>
    <variation>I</variation>
    <location>
        <position position="198"/>
    </location>
</feature>
<gene>
    <name type="primary">VPS2.1</name>
    <name type="synonym">CHMP2-1</name>
    <name type="synonym">SLP</name>
    <name type="ordered locus">At2g06530</name>
    <name type="ORF">T12H3.8</name>
</gene>
<dbReference type="EMBL" id="AC006420">
    <property type="protein sequence ID" value="AAD25152.2"/>
    <property type="molecule type" value="Genomic_DNA"/>
</dbReference>
<dbReference type="EMBL" id="CP002685">
    <property type="protein sequence ID" value="AEC06012.1"/>
    <property type="molecule type" value="Genomic_DNA"/>
</dbReference>
<dbReference type="EMBL" id="AY090953">
    <property type="protein sequence ID" value="AAM13999.1"/>
    <property type="molecule type" value="mRNA"/>
</dbReference>
<dbReference type="EMBL" id="AY088685">
    <property type="protein sequence ID" value="AAM67006.1"/>
    <property type="status" value="ALT_INIT"/>
    <property type="molecule type" value="mRNA"/>
</dbReference>
<dbReference type="EMBL" id="AJ628449">
    <property type="protein sequence ID" value="CAF31658.1"/>
    <property type="molecule type" value="Genomic_DNA"/>
</dbReference>
<dbReference type="EMBL" id="AJ628450">
    <property type="protein sequence ID" value="CAF31659.1"/>
    <property type="molecule type" value="Genomic_DNA"/>
</dbReference>
<dbReference type="EMBL" id="AJ628451">
    <property type="protein sequence ID" value="CAF31660.1"/>
    <property type="molecule type" value="Genomic_DNA"/>
</dbReference>
<dbReference type="EMBL" id="AJ628452">
    <property type="protein sequence ID" value="CAF31661.1"/>
    <property type="molecule type" value="Genomic_DNA"/>
</dbReference>
<dbReference type="EMBL" id="AJ628453">
    <property type="protein sequence ID" value="CAF31662.1"/>
    <property type="molecule type" value="Genomic_DNA"/>
</dbReference>
<dbReference type="EMBL" id="AJ628454">
    <property type="protein sequence ID" value="CAF31663.1"/>
    <property type="molecule type" value="Genomic_DNA"/>
</dbReference>
<dbReference type="EMBL" id="AJ628455">
    <property type="protein sequence ID" value="CAF31664.1"/>
    <property type="molecule type" value="Genomic_DNA"/>
</dbReference>
<dbReference type="EMBL" id="AJ628456">
    <property type="protein sequence ID" value="CAF31665.1"/>
    <property type="molecule type" value="Genomic_DNA"/>
</dbReference>
<dbReference type="EMBL" id="AJ628457">
    <property type="protein sequence ID" value="CAF31666.1"/>
    <property type="molecule type" value="Genomic_DNA"/>
</dbReference>
<dbReference type="EMBL" id="AJ628458">
    <property type="protein sequence ID" value="CAF31667.1"/>
    <property type="molecule type" value="Genomic_DNA"/>
</dbReference>
<dbReference type="EMBL" id="AJ628459">
    <property type="protein sequence ID" value="CAF31668.1"/>
    <property type="molecule type" value="Genomic_DNA"/>
</dbReference>
<dbReference type="EMBL" id="AJ628460">
    <property type="protein sequence ID" value="CAF31669.1"/>
    <property type="molecule type" value="Genomic_DNA"/>
</dbReference>
<dbReference type="EMBL" id="AJ628461">
    <property type="protein sequence ID" value="CAF31670.1"/>
    <property type="molecule type" value="Genomic_DNA"/>
</dbReference>
<dbReference type="EMBL" id="AJ628462">
    <property type="protein sequence ID" value="CAF31671.1"/>
    <property type="molecule type" value="Genomic_DNA"/>
</dbReference>
<dbReference type="EMBL" id="AJ628463">
    <property type="protein sequence ID" value="CAF31672.1"/>
    <property type="molecule type" value="Genomic_DNA"/>
</dbReference>
<dbReference type="EMBL" id="AJ628464">
    <property type="protein sequence ID" value="CAF31673.1"/>
    <property type="molecule type" value="Genomic_DNA"/>
</dbReference>
<dbReference type="EMBL" id="AJ628465">
    <property type="protein sequence ID" value="CAF31674.1"/>
    <property type="molecule type" value="Genomic_DNA"/>
</dbReference>
<dbReference type="EMBL" id="AJ628466">
    <property type="protein sequence ID" value="CAF31675.1"/>
    <property type="molecule type" value="Genomic_DNA"/>
</dbReference>
<dbReference type="EMBL" id="AJ628467">
    <property type="protein sequence ID" value="CAF31676.1"/>
    <property type="molecule type" value="Genomic_DNA"/>
</dbReference>
<dbReference type="EMBL" id="AJ628468">
    <property type="protein sequence ID" value="CAF31677.1"/>
    <property type="molecule type" value="Genomic_DNA"/>
</dbReference>
<dbReference type="EMBL" id="AJ628469">
    <property type="protein sequence ID" value="CAF31678.1"/>
    <property type="molecule type" value="Genomic_DNA"/>
</dbReference>
<dbReference type="EMBL" id="AJ628470">
    <property type="protein sequence ID" value="CAF31679.1"/>
    <property type="molecule type" value="Genomic_DNA"/>
</dbReference>
<dbReference type="EMBL" id="AJ628471">
    <property type="protein sequence ID" value="CAF31680.1"/>
    <property type="molecule type" value="Genomic_DNA"/>
</dbReference>
<dbReference type="EMBL" id="AJ628472">
    <property type="protein sequence ID" value="CAF31681.1"/>
    <property type="molecule type" value="Genomic_DNA"/>
</dbReference>
<dbReference type="EMBL" id="AJ628473">
    <property type="protein sequence ID" value="CAF31682.1"/>
    <property type="molecule type" value="Genomic_DNA"/>
</dbReference>
<dbReference type="EMBL" id="AJ628474">
    <property type="protein sequence ID" value="CAF31683.1"/>
    <property type="molecule type" value="Genomic_DNA"/>
</dbReference>
<dbReference type="EMBL" id="AJ628475">
    <property type="protein sequence ID" value="CAF31684.1"/>
    <property type="molecule type" value="Genomic_DNA"/>
</dbReference>
<dbReference type="EMBL" id="AJ628476">
    <property type="protein sequence ID" value="CAF31685.1"/>
    <property type="molecule type" value="Genomic_DNA"/>
</dbReference>
<dbReference type="EMBL" id="AJ628477">
    <property type="protein sequence ID" value="CAF31686.1"/>
    <property type="molecule type" value="Genomic_DNA"/>
</dbReference>
<dbReference type="EMBL" id="AJ628478">
    <property type="protein sequence ID" value="CAF31687.1"/>
    <property type="molecule type" value="Genomic_DNA"/>
</dbReference>
<dbReference type="EMBL" id="AJ628479">
    <property type="protein sequence ID" value="CAF31688.1"/>
    <property type="molecule type" value="Genomic_DNA"/>
</dbReference>
<dbReference type="EMBL" id="AJ628480">
    <property type="protein sequence ID" value="CAF31689.1"/>
    <property type="molecule type" value="Genomic_DNA"/>
</dbReference>
<dbReference type="EMBL" id="AJ628481">
    <property type="protein sequence ID" value="CAF31690.1"/>
    <property type="molecule type" value="Genomic_DNA"/>
</dbReference>
<dbReference type="EMBL" id="AJ628482">
    <property type="protein sequence ID" value="CAF31691.1"/>
    <property type="molecule type" value="Genomic_DNA"/>
</dbReference>
<dbReference type="EMBL" id="AJ628483">
    <property type="protein sequence ID" value="CAF31692.1"/>
    <property type="molecule type" value="Genomic_DNA"/>
</dbReference>
<dbReference type="EMBL" id="AJ628484">
    <property type="protein sequence ID" value="CAF31693.1"/>
    <property type="molecule type" value="Genomic_DNA"/>
</dbReference>
<dbReference type="EMBL" id="AJ628485">
    <property type="protein sequence ID" value="CAF31694.1"/>
    <property type="molecule type" value="Genomic_DNA"/>
</dbReference>
<dbReference type="EMBL" id="AJ628486">
    <property type="protein sequence ID" value="CAF31695.1"/>
    <property type="molecule type" value="Genomic_DNA"/>
</dbReference>
<dbReference type="EMBL" id="AJ628487">
    <property type="protein sequence ID" value="CAF31696.1"/>
    <property type="molecule type" value="Genomic_DNA"/>
</dbReference>
<dbReference type="EMBL" id="AJ628488">
    <property type="protein sequence ID" value="CAF31697.1"/>
    <property type="molecule type" value="Genomic_DNA"/>
</dbReference>
<dbReference type="EMBL" id="AJ628489">
    <property type="protein sequence ID" value="CAF31698.1"/>
    <property type="molecule type" value="Genomic_DNA"/>
</dbReference>
<dbReference type="EMBL" id="AJ628490">
    <property type="protein sequence ID" value="CAF31699.1"/>
    <property type="molecule type" value="Genomic_DNA"/>
</dbReference>
<dbReference type="EMBL" id="AJ628491">
    <property type="protein sequence ID" value="CAF31700.1"/>
    <property type="molecule type" value="Genomic_DNA"/>
</dbReference>
<dbReference type="EMBL" id="AJ628492">
    <property type="protein sequence ID" value="CAF31701.1"/>
    <property type="molecule type" value="Genomic_DNA"/>
</dbReference>
<dbReference type="EMBL" id="AJ628493">
    <property type="protein sequence ID" value="CAF31702.1"/>
    <property type="molecule type" value="Genomic_DNA"/>
</dbReference>
<dbReference type="EMBL" id="AJ628494">
    <property type="protein sequence ID" value="CAF31703.1"/>
    <property type="molecule type" value="Genomic_DNA"/>
</dbReference>
<dbReference type="EMBL" id="AJ628495">
    <property type="protein sequence ID" value="CAF31704.1"/>
    <property type="molecule type" value="Genomic_DNA"/>
</dbReference>
<dbReference type="EMBL" id="AJ628496">
    <property type="protein sequence ID" value="CAF31705.1"/>
    <property type="molecule type" value="Genomic_DNA"/>
</dbReference>
<dbReference type="EMBL" id="AJ628497">
    <property type="protein sequence ID" value="CAF31706.1"/>
    <property type="molecule type" value="Genomic_DNA"/>
</dbReference>
<dbReference type="EMBL" id="AJ628498">
    <property type="protein sequence ID" value="CAF31707.1"/>
    <property type="molecule type" value="Genomic_DNA"/>
</dbReference>
<dbReference type="EMBL" id="AJ628499">
    <property type="protein sequence ID" value="CAF31708.1"/>
    <property type="molecule type" value="Genomic_DNA"/>
</dbReference>
<dbReference type="EMBL" id="AJ628500">
    <property type="protein sequence ID" value="CAF31709.1"/>
    <property type="molecule type" value="Genomic_DNA"/>
</dbReference>
<dbReference type="EMBL" id="AJ628501">
    <property type="protein sequence ID" value="CAF31710.1"/>
    <property type="molecule type" value="Genomic_DNA"/>
</dbReference>
<dbReference type="EMBL" id="AJ628502">
    <property type="protein sequence ID" value="CAF31711.1"/>
    <property type="molecule type" value="Genomic_DNA"/>
</dbReference>
<dbReference type="EMBL" id="AJ628503">
    <property type="protein sequence ID" value="CAF31712.1"/>
    <property type="molecule type" value="Genomic_DNA"/>
</dbReference>
<dbReference type="EMBL" id="AJ628504">
    <property type="protein sequence ID" value="CAF31713.1"/>
    <property type="molecule type" value="Genomic_DNA"/>
</dbReference>
<dbReference type="EMBL" id="AJ628505">
    <property type="protein sequence ID" value="CAF31714.1"/>
    <property type="molecule type" value="Genomic_DNA"/>
</dbReference>
<dbReference type="EMBL" id="AJ628506">
    <property type="protein sequence ID" value="CAF31715.1"/>
    <property type="molecule type" value="Genomic_DNA"/>
</dbReference>
<dbReference type="EMBL" id="AJ628507">
    <property type="protein sequence ID" value="CAF31716.1"/>
    <property type="molecule type" value="Genomic_DNA"/>
</dbReference>
<dbReference type="EMBL" id="AJ628508">
    <property type="protein sequence ID" value="CAF31717.1"/>
    <property type="molecule type" value="Genomic_DNA"/>
</dbReference>
<dbReference type="EMBL" id="AJ628509">
    <property type="protein sequence ID" value="CAF31718.1"/>
    <property type="molecule type" value="Genomic_DNA"/>
</dbReference>
<dbReference type="EMBL" id="AJ628510">
    <property type="protein sequence ID" value="CAF31719.1"/>
    <property type="molecule type" value="Genomic_DNA"/>
</dbReference>
<dbReference type="EMBL" id="AJ628511">
    <property type="protein sequence ID" value="CAF31720.1"/>
    <property type="molecule type" value="Genomic_DNA"/>
</dbReference>
<dbReference type="EMBL" id="AJ628512">
    <property type="protein sequence ID" value="CAF31721.1"/>
    <property type="molecule type" value="Genomic_DNA"/>
</dbReference>
<dbReference type="EMBL" id="AJ628513">
    <property type="protein sequence ID" value="CAF31722.1"/>
    <property type="molecule type" value="Genomic_DNA"/>
</dbReference>
<dbReference type="EMBL" id="AJ628514">
    <property type="protein sequence ID" value="CAF31723.1"/>
    <property type="molecule type" value="Genomic_DNA"/>
</dbReference>
<dbReference type="EMBL" id="AJ628515">
    <property type="protein sequence ID" value="CAF31724.1"/>
    <property type="molecule type" value="Genomic_DNA"/>
</dbReference>
<dbReference type="EMBL" id="AJ628516">
    <property type="protein sequence ID" value="CAF31725.1"/>
    <property type="molecule type" value="Genomic_DNA"/>
</dbReference>
<dbReference type="EMBL" id="AJ628517">
    <property type="protein sequence ID" value="CAF31726.1"/>
    <property type="molecule type" value="Genomic_DNA"/>
</dbReference>
<dbReference type="EMBL" id="AJ628518">
    <property type="protein sequence ID" value="CAF31727.1"/>
    <property type="molecule type" value="Genomic_DNA"/>
</dbReference>
<dbReference type="EMBL" id="AJ628519">
    <property type="protein sequence ID" value="CAF31728.1"/>
    <property type="molecule type" value="Genomic_DNA"/>
</dbReference>
<dbReference type="EMBL" id="AJ628520">
    <property type="protein sequence ID" value="CAF31729.1"/>
    <property type="molecule type" value="Genomic_DNA"/>
</dbReference>
<dbReference type="EMBL" id="AJ628521">
    <property type="protein sequence ID" value="CAF31730.1"/>
    <property type="molecule type" value="Genomic_DNA"/>
</dbReference>
<dbReference type="EMBL" id="AJ628522">
    <property type="protein sequence ID" value="CAF31731.1"/>
    <property type="molecule type" value="Genomic_DNA"/>
</dbReference>
<dbReference type="EMBL" id="AJ628523">
    <property type="protein sequence ID" value="CAF31732.1"/>
    <property type="molecule type" value="Genomic_DNA"/>
</dbReference>
<dbReference type="EMBL" id="AJ628524">
    <property type="protein sequence ID" value="CAF31733.1"/>
    <property type="molecule type" value="Genomic_DNA"/>
</dbReference>
<dbReference type="EMBL" id="AJ628525">
    <property type="protein sequence ID" value="CAF31734.1"/>
    <property type="molecule type" value="Genomic_DNA"/>
</dbReference>
<dbReference type="EMBL" id="AJ628526">
    <property type="protein sequence ID" value="CAF31735.1"/>
    <property type="molecule type" value="Genomic_DNA"/>
</dbReference>
<dbReference type="EMBL" id="AJ628527">
    <property type="protein sequence ID" value="CAF31736.1"/>
    <property type="molecule type" value="Genomic_DNA"/>
</dbReference>
<dbReference type="EMBL" id="AJ628528">
    <property type="protein sequence ID" value="CAF31737.1"/>
    <property type="molecule type" value="Genomic_DNA"/>
</dbReference>
<dbReference type="EMBL" id="AJ628529">
    <property type="protein sequence ID" value="CAF31738.1"/>
    <property type="molecule type" value="Genomic_DNA"/>
</dbReference>
<dbReference type="EMBL" id="AJ628530">
    <property type="protein sequence ID" value="CAF31739.1"/>
    <property type="molecule type" value="Genomic_DNA"/>
</dbReference>
<dbReference type="EMBL" id="AJ628531">
    <property type="protein sequence ID" value="CAF31740.1"/>
    <property type="molecule type" value="Genomic_DNA"/>
</dbReference>
<dbReference type="EMBL" id="AJ628532">
    <property type="protein sequence ID" value="CAF31741.1"/>
    <property type="molecule type" value="Genomic_DNA"/>
</dbReference>
<dbReference type="EMBL" id="AJ628533">
    <property type="protein sequence ID" value="CAF31742.1"/>
    <property type="molecule type" value="Genomic_DNA"/>
</dbReference>
<dbReference type="EMBL" id="AJ628534">
    <property type="protein sequence ID" value="CAF31743.1"/>
    <property type="molecule type" value="Genomic_DNA"/>
</dbReference>
<dbReference type="EMBL" id="AJ628535">
    <property type="protein sequence ID" value="CAF31744.1"/>
    <property type="molecule type" value="Genomic_DNA"/>
</dbReference>
<dbReference type="EMBL" id="AJ628536">
    <property type="protein sequence ID" value="CAF31745.1"/>
    <property type="molecule type" value="Genomic_DNA"/>
</dbReference>
<dbReference type="EMBL" id="AJ628537">
    <property type="protein sequence ID" value="CAF31746.1"/>
    <property type="molecule type" value="Genomic_DNA"/>
</dbReference>
<dbReference type="EMBL" id="AJ628538">
    <property type="protein sequence ID" value="CAF31747.1"/>
    <property type="molecule type" value="Genomic_DNA"/>
</dbReference>
<dbReference type="EMBL" id="AJ628539">
    <property type="protein sequence ID" value="CAF31748.1"/>
    <property type="molecule type" value="Genomic_DNA"/>
</dbReference>
<dbReference type="EMBL" id="AJ628540">
    <property type="protein sequence ID" value="CAF31749.1"/>
    <property type="molecule type" value="Genomic_DNA"/>
</dbReference>
<dbReference type="EMBL" id="AJ628541">
    <property type="protein sequence ID" value="CAF31750.1"/>
    <property type="molecule type" value="Genomic_DNA"/>
</dbReference>
<dbReference type="EMBL" id="AJ628542">
    <property type="protein sequence ID" value="CAF31751.1"/>
    <property type="molecule type" value="Genomic_DNA"/>
</dbReference>
<dbReference type="EMBL" id="AJ628543">
    <property type="protein sequence ID" value="CAF31752.1"/>
    <property type="molecule type" value="Genomic_DNA"/>
</dbReference>
<dbReference type="EMBL" id="AJ628544">
    <property type="protein sequence ID" value="CAF31753.1"/>
    <property type="molecule type" value="Genomic_DNA"/>
</dbReference>
<dbReference type="EMBL" id="AJ628545">
    <property type="protein sequence ID" value="CAF31754.1"/>
    <property type="molecule type" value="Genomic_DNA"/>
</dbReference>
<dbReference type="EMBL" id="AJ628546">
    <property type="protein sequence ID" value="CAF31755.1"/>
    <property type="molecule type" value="Genomic_DNA"/>
</dbReference>
<dbReference type="PIR" id="D84478">
    <property type="entry name" value="D84478"/>
</dbReference>
<dbReference type="RefSeq" id="NP_565336.1">
    <property type="nucleotide sequence ID" value="NM_126650.4"/>
</dbReference>
<dbReference type="SMR" id="Q9SKI2"/>
<dbReference type="BioGRID" id="606">
    <property type="interactions" value="9"/>
</dbReference>
<dbReference type="FunCoup" id="Q9SKI2">
    <property type="interactions" value="4135"/>
</dbReference>
<dbReference type="IntAct" id="Q9SKI2">
    <property type="interactions" value="6"/>
</dbReference>
<dbReference type="STRING" id="3702.Q9SKI2"/>
<dbReference type="TCDB" id="3.A.31.1.2">
    <property type="family name" value="the endosomal sorting complexes required for transport iii (escrt-iii) family"/>
</dbReference>
<dbReference type="PaxDb" id="3702-AT2G06530.1"/>
<dbReference type="ProteomicsDB" id="242568"/>
<dbReference type="EnsemblPlants" id="AT2G06530.1">
    <property type="protein sequence ID" value="AT2G06530.1"/>
    <property type="gene ID" value="AT2G06530"/>
</dbReference>
<dbReference type="GeneID" id="815211"/>
<dbReference type="Gramene" id="AT2G06530.1">
    <property type="protein sequence ID" value="AT2G06530.1"/>
    <property type="gene ID" value="AT2G06530"/>
</dbReference>
<dbReference type="KEGG" id="ath:AT2G06530"/>
<dbReference type="Araport" id="AT2G06530"/>
<dbReference type="TAIR" id="AT2G06530">
    <property type="gene designation" value="VPS2.1"/>
</dbReference>
<dbReference type="eggNOG" id="KOG3230">
    <property type="taxonomic scope" value="Eukaryota"/>
</dbReference>
<dbReference type="HOGENOM" id="CLU_069208_1_1_1"/>
<dbReference type="InParanoid" id="Q9SKI2"/>
<dbReference type="OMA" id="KMAKMNQ"/>
<dbReference type="OrthoDB" id="5594417at2759"/>
<dbReference type="PhylomeDB" id="Q9SKI2"/>
<dbReference type="CD-CODE" id="4299E36E">
    <property type="entry name" value="Nucleolus"/>
</dbReference>
<dbReference type="PRO" id="PR:Q9SKI2"/>
<dbReference type="Proteomes" id="UP000006548">
    <property type="component" value="Chromosome 2"/>
</dbReference>
<dbReference type="ExpressionAtlas" id="Q9SKI2">
    <property type="expression patterns" value="baseline and differential"/>
</dbReference>
<dbReference type="GO" id="GO:0000815">
    <property type="term" value="C:ESCRT III complex"/>
    <property type="evidence" value="ECO:0000250"/>
    <property type="project" value="TAIR"/>
</dbReference>
<dbReference type="GO" id="GO:0005770">
    <property type="term" value="C:late endosome"/>
    <property type="evidence" value="ECO:0000314"/>
    <property type="project" value="TAIR"/>
</dbReference>
<dbReference type="GO" id="GO:0005739">
    <property type="term" value="C:mitochondrion"/>
    <property type="evidence" value="ECO:0007005"/>
    <property type="project" value="TAIR"/>
</dbReference>
<dbReference type="GO" id="GO:0005771">
    <property type="term" value="C:multivesicular body"/>
    <property type="evidence" value="ECO:0000314"/>
    <property type="project" value="TAIR"/>
</dbReference>
<dbReference type="GO" id="GO:0070676">
    <property type="term" value="P:intralumenal vesicle formation"/>
    <property type="evidence" value="ECO:0000314"/>
    <property type="project" value="TAIR"/>
</dbReference>
<dbReference type="GO" id="GO:0015031">
    <property type="term" value="P:protein transport"/>
    <property type="evidence" value="ECO:0000315"/>
    <property type="project" value="TAIR"/>
</dbReference>
<dbReference type="GO" id="GO:0007034">
    <property type="term" value="P:vacuolar transport"/>
    <property type="evidence" value="ECO:0007669"/>
    <property type="project" value="InterPro"/>
</dbReference>
<dbReference type="Gene3D" id="6.10.140.1230">
    <property type="match status" value="1"/>
</dbReference>
<dbReference type="InterPro" id="IPR005024">
    <property type="entry name" value="Snf7_fam"/>
</dbReference>
<dbReference type="PANTHER" id="PTHR10476">
    <property type="entry name" value="CHARGED MULTIVESICULAR BODY PROTEIN"/>
    <property type="match status" value="1"/>
</dbReference>
<dbReference type="Pfam" id="PF03357">
    <property type="entry name" value="Snf7"/>
    <property type="match status" value="1"/>
</dbReference>
<comment type="function">
    <text evidence="1">Component of the ESCRT-III complex, which is required for multivesicular bodies (MVBs) formation and sorting of endosomal cargo proteins into MVBs. The ESCRT-III complex is probably involved in the concentration of MVB cargo (By similarity).</text>
</comment>
<comment type="subunit">
    <text evidence="2 4 5">Component of the endosomal sorting required for transport complex III (ESCRT-III), composed at least of VPS2, VPS20, VPS24 and VPS32 (By similarity). Interacts with SKD1 (PubMed:21810997, PubMed:24812106).</text>
</comment>
<comment type="interaction">
    <interactant intactId="EBI-3865345">
        <id>Q9SKI2</id>
    </interactant>
    <interactant intactId="EBI-3865323">
        <id>Q0WTY4</id>
        <label>VPS2.2</label>
    </interactant>
    <organismsDiffer>false</organismsDiffer>
    <experiments>3</experiments>
</comment>
<comment type="interaction">
    <interactant intactId="EBI-3865345">
        <id>Q9SKI2</id>
    </interactant>
    <interactant intactId="EBI-3865302">
        <id>Q9FF81</id>
        <label>VPS36</label>
    </interactant>
    <organismsDiffer>false</organismsDiffer>
    <experiments>3</experiments>
</comment>
<comment type="interaction">
    <interactant intactId="EBI-3865345">
        <id>Q9SKI2</id>
    </interactant>
    <interactant intactId="EBI-3865264">
        <id>Q9SCP9</id>
        <label>VPS37-1</label>
    </interactant>
    <organismsDiffer>false</organismsDiffer>
    <experiments>3</experiments>
</comment>
<comment type="subcellular location">
    <subcellularLocation>
        <location evidence="1">Endosome</location>
    </subcellularLocation>
</comment>
<comment type="similarity">
    <text evidence="6">Belongs to the SNF7 family.</text>
</comment>
<comment type="sequence caution" evidence="6">
    <conflict type="erroneous initiation">
        <sequence resource="EMBL-CDS" id="AAM67006"/>
    </conflict>
    <text>Truncated N-terminus.</text>
</comment>